<protein>
    <recommendedName>
        <fullName evidence="1">Elongation factor P--(R)-beta-lysine ligase</fullName>
        <shortName evidence="1">EF-P--(R)-beta-lysine ligase</shortName>
        <ecNumber evidence="1">6.3.2.-</ecNumber>
    </recommendedName>
    <alternativeName>
        <fullName evidence="1">EF-P post-translational modification enzyme A</fullName>
    </alternativeName>
    <alternativeName>
        <fullName evidence="1">EF-P-lysine lysyltransferase</fullName>
    </alternativeName>
</protein>
<comment type="function">
    <text evidence="1">With EpmB is involved in the beta-lysylation step of the post-translational modification of translation elongation factor P (EF-P) on 'Lys-34'. Catalyzes the ATP-dependent activation of (R)-beta-lysine produced by EpmB, forming a lysyl-adenylate, from which the beta-lysyl moiety is then transferred to the epsilon-amino group of EF-P 'Lys-34'.</text>
</comment>
<comment type="catalytic activity">
    <reaction evidence="1">
        <text>D-beta-lysine + L-lysyl-[protein] + ATP = N(6)-((3R)-3,6-diaminohexanoyl)-L-lysyl-[protein] + AMP + diphosphate + H(+)</text>
        <dbReference type="Rhea" id="RHEA:83435"/>
        <dbReference type="Rhea" id="RHEA-COMP:9752"/>
        <dbReference type="Rhea" id="RHEA-COMP:20131"/>
        <dbReference type="ChEBI" id="CHEBI:15378"/>
        <dbReference type="ChEBI" id="CHEBI:29969"/>
        <dbReference type="ChEBI" id="CHEBI:30616"/>
        <dbReference type="ChEBI" id="CHEBI:33019"/>
        <dbReference type="ChEBI" id="CHEBI:84138"/>
        <dbReference type="ChEBI" id="CHEBI:156053"/>
        <dbReference type="ChEBI" id="CHEBI:456215"/>
    </reaction>
    <physiologicalReaction direction="left-to-right" evidence="1">
        <dbReference type="Rhea" id="RHEA:83436"/>
    </physiologicalReaction>
</comment>
<comment type="subunit">
    <text evidence="1">Homodimer.</text>
</comment>
<comment type="similarity">
    <text evidence="1">Belongs to the class-II aminoacyl-tRNA synthetase family. EpmA subfamily.</text>
</comment>
<feature type="chain" id="PRO_1000097904" description="Elongation factor P--(R)-beta-lysine ligase">
    <location>
        <begin position="1"/>
        <end position="325"/>
    </location>
</feature>
<feature type="binding site" evidence="1">
    <location>
        <begin position="76"/>
        <end position="78"/>
    </location>
    <ligand>
        <name>substrate</name>
    </ligand>
</feature>
<feature type="binding site" evidence="1">
    <location>
        <begin position="100"/>
        <end position="102"/>
    </location>
    <ligand>
        <name>ATP</name>
        <dbReference type="ChEBI" id="CHEBI:30616"/>
    </ligand>
</feature>
<feature type="binding site" evidence="1">
    <location>
        <position position="109"/>
    </location>
    <ligand>
        <name>ATP</name>
        <dbReference type="ChEBI" id="CHEBI:30616"/>
    </ligand>
</feature>
<feature type="binding site" evidence="1">
    <location>
        <position position="118"/>
    </location>
    <ligand>
        <name>substrate</name>
    </ligand>
</feature>
<feature type="binding site" evidence="1">
    <location>
        <begin position="244"/>
        <end position="245"/>
    </location>
    <ligand>
        <name>ATP</name>
        <dbReference type="ChEBI" id="CHEBI:30616"/>
    </ligand>
</feature>
<feature type="binding site" evidence="1">
    <location>
        <position position="251"/>
    </location>
    <ligand>
        <name>substrate</name>
    </ligand>
</feature>
<feature type="binding site" evidence="1">
    <location>
        <position position="300"/>
    </location>
    <ligand>
        <name>ATP</name>
        <dbReference type="ChEBI" id="CHEBI:30616"/>
    </ligand>
</feature>
<evidence type="ECO:0000255" key="1">
    <source>
        <dbReference type="HAMAP-Rule" id="MF_00174"/>
    </source>
</evidence>
<name>EPMA_SALA4</name>
<sequence>MSETATWQPSASIPNLLKRAAIMAEIRRFFADRGVLEVETPCMSQATVTDIHLFPFETRFVGPGHSQGINLYLMTSPEYHMKRLLAAGCGPVFQLCRSFRNEEMGRHHNPEFTMLEWYRPHYDMYRLMNEVDDLLQQVLDCQPAESLSYQQAFQRHLEIDPLSADKTQLREAAAKLDLSNIADTEEDRDTLLQLLFTMGVEPHIGKEKPTFIYHFPASQASLAQISTEDHRVAERFEVYYKGIELANGFHELTDAREQQQRFEQDNRKRAARGLPQQPIDQNLLDALAAGLPDCSGVALGVDRLVMLALGAESLADVIAFTVDRA</sequence>
<dbReference type="EC" id="6.3.2.-" evidence="1"/>
<dbReference type="EMBL" id="CP001138">
    <property type="protein sequence ID" value="ACH51760.1"/>
    <property type="molecule type" value="Genomic_DNA"/>
</dbReference>
<dbReference type="RefSeq" id="WP_000004794.1">
    <property type="nucleotide sequence ID" value="NC_011149.1"/>
</dbReference>
<dbReference type="SMR" id="B5F2M2"/>
<dbReference type="KEGG" id="sea:SeAg_B4622"/>
<dbReference type="HOGENOM" id="CLU_008255_1_1_6"/>
<dbReference type="Proteomes" id="UP000008819">
    <property type="component" value="Chromosome"/>
</dbReference>
<dbReference type="GO" id="GO:0005829">
    <property type="term" value="C:cytosol"/>
    <property type="evidence" value="ECO:0007669"/>
    <property type="project" value="TreeGrafter"/>
</dbReference>
<dbReference type="GO" id="GO:0016880">
    <property type="term" value="F:acid-ammonia (or amide) ligase activity"/>
    <property type="evidence" value="ECO:0007669"/>
    <property type="project" value="UniProtKB-UniRule"/>
</dbReference>
<dbReference type="GO" id="GO:0005524">
    <property type="term" value="F:ATP binding"/>
    <property type="evidence" value="ECO:0007669"/>
    <property type="project" value="UniProtKB-UniRule"/>
</dbReference>
<dbReference type="GO" id="GO:0004824">
    <property type="term" value="F:lysine-tRNA ligase activity"/>
    <property type="evidence" value="ECO:0007669"/>
    <property type="project" value="InterPro"/>
</dbReference>
<dbReference type="GO" id="GO:0000049">
    <property type="term" value="F:tRNA binding"/>
    <property type="evidence" value="ECO:0007669"/>
    <property type="project" value="TreeGrafter"/>
</dbReference>
<dbReference type="GO" id="GO:0006430">
    <property type="term" value="P:lysyl-tRNA aminoacylation"/>
    <property type="evidence" value="ECO:0007669"/>
    <property type="project" value="InterPro"/>
</dbReference>
<dbReference type="FunFam" id="3.30.930.10:FF:000017">
    <property type="entry name" value="Elongation factor P--(R)-beta-lysine ligase"/>
    <property type="match status" value="1"/>
</dbReference>
<dbReference type="Gene3D" id="3.30.930.10">
    <property type="entry name" value="Bira Bifunctional Protein, Domain 2"/>
    <property type="match status" value="1"/>
</dbReference>
<dbReference type="HAMAP" id="MF_00174">
    <property type="entry name" value="EF_P_modif_A"/>
    <property type="match status" value="1"/>
</dbReference>
<dbReference type="InterPro" id="IPR004364">
    <property type="entry name" value="Aa-tRNA-synt_II"/>
</dbReference>
<dbReference type="InterPro" id="IPR006195">
    <property type="entry name" value="aa-tRNA-synth_II"/>
</dbReference>
<dbReference type="InterPro" id="IPR045864">
    <property type="entry name" value="aa-tRNA-synth_II/BPL/LPL"/>
</dbReference>
<dbReference type="InterPro" id="IPR004525">
    <property type="entry name" value="EpmA"/>
</dbReference>
<dbReference type="InterPro" id="IPR018149">
    <property type="entry name" value="Lys-tRNA-synth_II_C"/>
</dbReference>
<dbReference type="NCBIfam" id="TIGR00462">
    <property type="entry name" value="genX"/>
    <property type="match status" value="1"/>
</dbReference>
<dbReference type="NCBIfam" id="NF006828">
    <property type="entry name" value="PRK09350.1"/>
    <property type="match status" value="1"/>
</dbReference>
<dbReference type="PANTHER" id="PTHR42918:SF6">
    <property type="entry name" value="ELONGATION FACTOR P--(R)-BETA-LYSINE LIGASE"/>
    <property type="match status" value="1"/>
</dbReference>
<dbReference type="PANTHER" id="PTHR42918">
    <property type="entry name" value="LYSYL-TRNA SYNTHETASE"/>
    <property type="match status" value="1"/>
</dbReference>
<dbReference type="Pfam" id="PF00152">
    <property type="entry name" value="tRNA-synt_2"/>
    <property type="match status" value="1"/>
</dbReference>
<dbReference type="PRINTS" id="PR00982">
    <property type="entry name" value="TRNASYNTHLYS"/>
</dbReference>
<dbReference type="SUPFAM" id="SSF55681">
    <property type="entry name" value="Class II aaRS and biotin synthetases"/>
    <property type="match status" value="1"/>
</dbReference>
<dbReference type="PROSITE" id="PS50862">
    <property type="entry name" value="AA_TRNA_LIGASE_II"/>
    <property type="match status" value="1"/>
</dbReference>
<organism>
    <name type="scientific">Salmonella agona (strain SL483)</name>
    <dbReference type="NCBI Taxonomy" id="454166"/>
    <lineage>
        <taxon>Bacteria</taxon>
        <taxon>Pseudomonadati</taxon>
        <taxon>Pseudomonadota</taxon>
        <taxon>Gammaproteobacteria</taxon>
        <taxon>Enterobacterales</taxon>
        <taxon>Enterobacteriaceae</taxon>
        <taxon>Salmonella</taxon>
    </lineage>
</organism>
<reference key="1">
    <citation type="journal article" date="2011" name="J. Bacteriol.">
        <title>Comparative genomics of 28 Salmonella enterica isolates: evidence for CRISPR-mediated adaptive sublineage evolution.</title>
        <authorList>
            <person name="Fricke W.F."/>
            <person name="Mammel M.K."/>
            <person name="McDermott P.F."/>
            <person name="Tartera C."/>
            <person name="White D.G."/>
            <person name="Leclerc J.E."/>
            <person name="Ravel J."/>
            <person name="Cebula T.A."/>
        </authorList>
    </citation>
    <scope>NUCLEOTIDE SEQUENCE [LARGE SCALE GENOMIC DNA]</scope>
    <source>
        <strain>SL483</strain>
    </source>
</reference>
<proteinExistence type="inferred from homology"/>
<accession>B5F2M2</accession>
<keyword id="KW-0067">ATP-binding</keyword>
<keyword id="KW-0436">Ligase</keyword>
<keyword id="KW-0547">Nucleotide-binding</keyword>
<gene>
    <name evidence="1" type="primary">epmA</name>
    <name type="synonym">yjeA</name>
    <name type="ordered locus">SeAg_B4622</name>
</gene>